<accession>B9LML9</accession>
<proteinExistence type="inferred from homology"/>
<sequence length="57" mass="5847">MAGSFHRVACGDCENEQVVFGKASSVVSCAVCGTTLATPTGGEAEFHGEIVETVEAR</sequence>
<comment type="cofactor">
    <cofactor evidence="1">
        <name>Zn(2+)</name>
        <dbReference type="ChEBI" id="CHEBI:29105"/>
    </cofactor>
    <text evidence="1">Binds 1 zinc ion per subunit.</text>
</comment>
<comment type="subunit">
    <text evidence="1">Part of the 30S ribosomal subunit.</text>
</comment>
<comment type="similarity">
    <text evidence="1">Belongs to the eukaryotic ribosomal protein eS27 family.</text>
</comment>
<protein>
    <recommendedName>
        <fullName evidence="1">Small ribosomal subunit protein eS27</fullName>
    </recommendedName>
    <alternativeName>
        <fullName evidence="2">30S ribosomal protein S27e</fullName>
    </alternativeName>
</protein>
<organism>
    <name type="scientific">Halorubrum lacusprofundi (strain ATCC 49239 / DSM 5036 / JCM 8891 / ACAM 34)</name>
    <dbReference type="NCBI Taxonomy" id="416348"/>
    <lineage>
        <taxon>Archaea</taxon>
        <taxon>Methanobacteriati</taxon>
        <taxon>Methanobacteriota</taxon>
        <taxon>Stenosarchaea group</taxon>
        <taxon>Halobacteria</taxon>
        <taxon>Halobacteriales</taxon>
        <taxon>Haloferacaceae</taxon>
        <taxon>Halorubrum</taxon>
    </lineage>
</organism>
<reference key="1">
    <citation type="journal article" date="2016" name="Stand. Genomic Sci.">
        <title>Complete genome sequence of the Antarctic Halorubrum lacusprofundi type strain ACAM 34.</title>
        <authorList>
            <person name="Anderson I.J."/>
            <person name="DasSarma P."/>
            <person name="Lucas S."/>
            <person name="Copeland A."/>
            <person name="Lapidus A."/>
            <person name="Del Rio T.G."/>
            <person name="Tice H."/>
            <person name="Dalin E."/>
            <person name="Bruce D.C."/>
            <person name="Goodwin L."/>
            <person name="Pitluck S."/>
            <person name="Sims D."/>
            <person name="Brettin T.S."/>
            <person name="Detter J.C."/>
            <person name="Han C.S."/>
            <person name="Larimer F."/>
            <person name="Hauser L."/>
            <person name="Land M."/>
            <person name="Ivanova N."/>
            <person name="Richardson P."/>
            <person name="Cavicchioli R."/>
            <person name="DasSarma S."/>
            <person name="Woese C.R."/>
            <person name="Kyrpides N.C."/>
        </authorList>
    </citation>
    <scope>NUCLEOTIDE SEQUENCE [LARGE SCALE GENOMIC DNA]</scope>
    <source>
        <strain>ATCC 49239 / DSM 5036 / JCM 8891 / ACAM 34</strain>
    </source>
</reference>
<feature type="chain" id="PRO_1000194306" description="Small ribosomal subunit protein eS27">
    <location>
        <begin position="1"/>
        <end position="57"/>
    </location>
</feature>
<feature type="zinc finger region" description="C4-type" evidence="1">
    <location>
        <begin position="10"/>
        <end position="32"/>
    </location>
</feature>
<feature type="binding site" evidence="1">
    <location>
        <position position="10"/>
    </location>
    <ligand>
        <name>Zn(2+)</name>
        <dbReference type="ChEBI" id="CHEBI:29105"/>
    </ligand>
</feature>
<feature type="binding site" evidence="1">
    <location>
        <position position="13"/>
    </location>
    <ligand>
        <name>Zn(2+)</name>
        <dbReference type="ChEBI" id="CHEBI:29105"/>
    </ligand>
</feature>
<feature type="binding site" evidence="1">
    <location>
        <position position="29"/>
    </location>
    <ligand>
        <name>Zn(2+)</name>
        <dbReference type="ChEBI" id="CHEBI:29105"/>
    </ligand>
</feature>
<feature type="binding site" evidence="1">
    <location>
        <position position="32"/>
    </location>
    <ligand>
        <name>Zn(2+)</name>
        <dbReference type="ChEBI" id="CHEBI:29105"/>
    </ligand>
</feature>
<name>RS27_HALLT</name>
<evidence type="ECO:0000255" key="1">
    <source>
        <dbReference type="HAMAP-Rule" id="MF_00371"/>
    </source>
</evidence>
<evidence type="ECO:0000305" key="2"/>
<keyword id="KW-0479">Metal-binding</keyword>
<keyword id="KW-1185">Reference proteome</keyword>
<keyword id="KW-0687">Ribonucleoprotein</keyword>
<keyword id="KW-0689">Ribosomal protein</keyword>
<keyword id="KW-0862">Zinc</keyword>
<keyword id="KW-0863">Zinc-finger</keyword>
<gene>
    <name evidence="1" type="primary">rps27e</name>
    <name type="ordered locus">Hlac_1010</name>
</gene>
<dbReference type="EMBL" id="CP001365">
    <property type="protein sequence ID" value="ACM56607.1"/>
    <property type="molecule type" value="Genomic_DNA"/>
</dbReference>
<dbReference type="RefSeq" id="WP_015909755.1">
    <property type="nucleotide sequence ID" value="NC_012029.1"/>
</dbReference>
<dbReference type="SMR" id="B9LML9"/>
<dbReference type="GeneID" id="7401905"/>
<dbReference type="KEGG" id="hla:Hlac_1010"/>
<dbReference type="eggNOG" id="arCOG04108">
    <property type="taxonomic scope" value="Archaea"/>
</dbReference>
<dbReference type="HOGENOM" id="CLU_199465_0_0_2"/>
<dbReference type="Proteomes" id="UP000000740">
    <property type="component" value="Chromosome 1"/>
</dbReference>
<dbReference type="GO" id="GO:1990904">
    <property type="term" value="C:ribonucleoprotein complex"/>
    <property type="evidence" value="ECO:0007669"/>
    <property type="project" value="UniProtKB-KW"/>
</dbReference>
<dbReference type="GO" id="GO:0005840">
    <property type="term" value="C:ribosome"/>
    <property type="evidence" value="ECO:0007669"/>
    <property type="project" value="UniProtKB-KW"/>
</dbReference>
<dbReference type="GO" id="GO:0003735">
    <property type="term" value="F:structural constituent of ribosome"/>
    <property type="evidence" value="ECO:0007669"/>
    <property type="project" value="InterPro"/>
</dbReference>
<dbReference type="GO" id="GO:0008270">
    <property type="term" value="F:zinc ion binding"/>
    <property type="evidence" value="ECO:0007669"/>
    <property type="project" value="UniProtKB-UniRule"/>
</dbReference>
<dbReference type="GO" id="GO:0006412">
    <property type="term" value="P:translation"/>
    <property type="evidence" value="ECO:0007669"/>
    <property type="project" value="UniProtKB-UniRule"/>
</dbReference>
<dbReference type="Gene3D" id="2.20.25.100">
    <property type="entry name" value="Zn-binding ribosomal proteins"/>
    <property type="match status" value="1"/>
</dbReference>
<dbReference type="HAMAP" id="MF_00371">
    <property type="entry name" value="Ribosomal_eS27"/>
    <property type="match status" value="1"/>
</dbReference>
<dbReference type="InterPro" id="IPR000592">
    <property type="entry name" value="Ribosomal_eS27"/>
</dbReference>
<dbReference type="InterPro" id="IPR023407">
    <property type="entry name" value="Ribosomal_eS27_Zn-bd_dom_sf"/>
</dbReference>
<dbReference type="InterPro" id="IPR011332">
    <property type="entry name" value="Ribosomal_zn-bd"/>
</dbReference>
<dbReference type="NCBIfam" id="NF001629">
    <property type="entry name" value="PRK00415.1"/>
    <property type="match status" value="1"/>
</dbReference>
<dbReference type="Pfam" id="PF01667">
    <property type="entry name" value="Ribosomal_S27e"/>
    <property type="match status" value="1"/>
</dbReference>
<dbReference type="SUPFAM" id="SSF57829">
    <property type="entry name" value="Zn-binding ribosomal proteins"/>
    <property type="match status" value="1"/>
</dbReference>